<feature type="chain" id="PRO_0000097860" description="Probable cyclic pyranopterin monophosphate synthase">
    <location>
        <begin position="1"/>
        <end position="156"/>
    </location>
</feature>
<feature type="active site" evidence="1">
    <location>
        <position position="124"/>
    </location>
</feature>
<feature type="binding site" evidence="1">
    <location>
        <begin position="73"/>
        <end position="75"/>
    </location>
    <ligand>
        <name>substrate</name>
    </ligand>
</feature>
<feature type="binding site" evidence="1">
    <location>
        <begin position="109"/>
        <end position="110"/>
    </location>
    <ligand>
        <name>substrate</name>
    </ligand>
</feature>
<gene>
    <name evidence="1" type="primary">moaC</name>
    <name type="ordered locus">PF1854</name>
</gene>
<sequence>MKLTHVDEKGVKMVEVGHKKDMYRRAIAKGRIKLKPETIKLIREGKIEKGNVLAAAQIAGILAVKKTFDIIPLCHPIPLTGVDITFDFGEDYIEVTCEVRAIYKTGVEMEALTGVSVALLTIWDMVKAVEKDEKGQYPYTKIEEIRVVEKIKEERS</sequence>
<protein>
    <recommendedName>
        <fullName evidence="1">Probable cyclic pyranopterin monophosphate synthase</fullName>
        <ecNumber evidence="1">4.6.1.17</ecNumber>
    </recommendedName>
    <alternativeName>
        <fullName evidence="1">Molybdenum cofactor biosynthesis protein C</fullName>
    </alternativeName>
</protein>
<dbReference type="EC" id="4.6.1.17" evidence="1"/>
<dbReference type="EMBL" id="AE009950">
    <property type="protein sequence ID" value="AAL81978.1"/>
    <property type="molecule type" value="Genomic_DNA"/>
</dbReference>
<dbReference type="RefSeq" id="WP_011012994.1">
    <property type="nucleotide sequence ID" value="NZ_CP023154.1"/>
</dbReference>
<dbReference type="SMR" id="Q8TZX1"/>
<dbReference type="STRING" id="186497.PF1854"/>
<dbReference type="PaxDb" id="186497-PF1854"/>
<dbReference type="GeneID" id="41713674"/>
<dbReference type="KEGG" id="pfu:PF1854"/>
<dbReference type="PATRIC" id="fig|186497.12.peg.1925"/>
<dbReference type="eggNOG" id="arCOG01530">
    <property type="taxonomic scope" value="Archaea"/>
</dbReference>
<dbReference type="HOGENOM" id="CLU_074693_1_2_2"/>
<dbReference type="OrthoDB" id="10067at2157"/>
<dbReference type="PhylomeDB" id="Q8TZX1"/>
<dbReference type="UniPathway" id="UPA00344"/>
<dbReference type="Proteomes" id="UP000001013">
    <property type="component" value="Chromosome"/>
</dbReference>
<dbReference type="GO" id="GO:0061799">
    <property type="term" value="F:cyclic pyranopterin monophosphate synthase activity"/>
    <property type="evidence" value="ECO:0007669"/>
    <property type="project" value="UniProtKB-UniRule"/>
</dbReference>
<dbReference type="GO" id="GO:0006777">
    <property type="term" value="P:Mo-molybdopterin cofactor biosynthetic process"/>
    <property type="evidence" value="ECO:0007669"/>
    <property type="project" value="UniProtKB-UniRule"/>
</dbReference>
<dbReference type="CDD" id="cd01419">
    <property type="entry name" value="MoaC_A"/>
    <property type="match status" value="1"/>
</dbReference>
<dbReference type="Gene3D" id="3.30.70.640">
    <property type="entry name" value="Molybdopterin cofactor biosynthesis C (MoaC) domain"/>
    <property type="match status" value="1"/>
</dbReference>
<dbReference type="HAMAP" id="MF_01224_A">
    <property type="entry name" value="MoaC_A"/>
    <property type="match status" value="1"/>
</dbReference>
<dbReference type="InterPro" id="IPR023047">
    <property type="entry name" value="Mo_CF_biosynth-C_arc"/>
</dbReference>
<dbReference type="InterPro" id="IPR023045">
    <property type="entry name" value="MoaC"/>
</dbReference>
<dbReference type="InterPro" id="IPR036522">
    <property type="entry name" value="MoaC_sf"/>
</dbReference>
<dbReference type="InterPro" id="IPR050105">
    <property type="entry name" value="MoCo_biosynth_MoaA/MoaC"/>
</dbReference>
<dbReference type="InterPro" id="IPR002820">
    <property type="entry name" value="Mopterin_CF_biosynth-C_dom"/>
</dbReference>
<dbReference type="NCBIfam" id="TIGR00581">
    <property type="entry name" value="moaC"/>
    <property type="match status" value="1"/>
</dbReference>
<dbReference type="NCBIfam" id="NF006870">
    <property type="entry name" value="PRK09364.1"/>
    <property type="match status" value="1"/>
</dbReference>
<dbReference type="NCBIfam" id="NF008999">
    <property type="entry name" value="PRK12343.1"/>
    <property type="match status" value="1"/>
</dbReference>
<dbReference type="PANTHER" id="PTHR22960">
    <property type="entry name" value="MOLYBDOPTERIN COFACTOR SYNTHESIS PROTEIN A"/>
    <property type="match status" value="1"/>
</dbReference>
<dbReference type="Pfam" id="PF01967">
    <property type="entry name" value="MoaC"/>
    <property type="match status" value="1"/>
</dbReference>
<dbReference type="SUPFAM" id="SSF55040">
    <property type="entry name" value="Molybdenum cofactor biosynthesis protein C, MoaC"/>
    <property type="match status" value="1"/>
</dbReference>
<evidence type="ECO:0000255" key="1">
    <source>
        <dbReference type="HAMAP-Rule" id="MF_01224"/>
    </source>
</evidence>
<accession>Q8TZX1</accession>
<organism>
    <name type="scientific">Pyrococcus furiosus (strain ATCC 43587 / DSM 3638 / JCM 8422 / Vc1)</name>
    <dbReference type="NCBI Taxonomy" id="186497"/>
    <lineage>
        <taxon>Archaea</taxon>
        <taxon>Methanobacteriati</taxon>
        <taxon>Methanobacteriota</taxon>
        <taxon>Thermococci</taxon>
        <taxon>Thermococcales</taxon>
        <taxon>Thermococcaceae</taxon>
        <taxon>Pyrococcus</taxon>
    </lineage>
</organism>
<keyword id="KW-0456">Lyase</keyword>
<keyword id="KW-0501">Molybdenum cofactor biosynthesis</keyword>
<keyword id="KW-1185">Reference proteome</keyword>
<comment type="function">
    <text evidence="1">Catalyzes the conversion of (8S)-3',8-cyclo-7,8-dihydroguanosine 5'-triphosphate to cyclic pyranopterin monophosphate (cPMP).</text>
</comment>
<comment type="catalytic activity">
    <reaction evidence="1">
        <text>(8S)-3',8-cyclo-7,8-dihydroguanosine 5'-triphosphate = cyclic pyranopterin phosphate + diphosphate</text>
        <dbReference type="Rhea" id="RHEA:49580"/>
        <dbReference type="ChEBI" id="CHEBI:33019"/>
        <dbReference type="ChEBI" id="CHEBI:59648"/>
        <dbReference type="ChEBI" id="CHEBI:131766"/>
        <dbReference type="EC" id="4.6.1.17"/>
    </reaction>
</comment>
<comment type="pathway">
    <text evidence="1">Cofactor biosynthesis; molybdopterin biosynthesis.</text>
</comment>
<comment type="subunit">
    <text evidence="1">Homohexamer; trimer of dimers.</text>
</comment>
<comment type="similarity">
    <text evidence="1">Belongs to the MoaC family.</text>
</comment>
<name>MOAC_PYRFU</name>
<reference key="1">
    <citation type="journal article" date="1999" name="Genetics">
        <title>Divergence of the hyperthermophilic archaea Pyrococcus furiosus and P. horikoshii inferred from complete genomic sequences.</title>
        <authorList>
            <person name="Maeder D.L."/>
            <person name="Weiss R.B."/>
            <person name="Dunn D.M."/>
            <person name="Cherry J.L."/>
            <person name="Gonzalez J.M."/>
            <person name="DiRuggiero J."/>
            <person name="Robb F.T."/>
        </authorList>
    </citation>
    <scope>NUCLEOTIDE SEQUENCE [LARGE SCALE GENOMIC DNA]</scope>
    <source>
        <strain>ATCC 43587 / DSM 3638 / JCM 8422 / Vc1</strain>
    </source>
</reference>
<proteinExistence type="inferred from homology"/>